<accession>Q00566</accession>
<accession>Q09HV7</accession>
<accession>Q09HV8</accession>
<keyword id="KW-0007">Acetylation</keyword>
<keyword id="KW-0025">Alternative splicing</keyword>
<keyword id="KW-0903">Direct protein sequencing</keyword>
<keyword id="KW-0238">DNA-binding</keyword>
<keyword id="KW-0488">Methylation</keyword>
<keyword id="KW-0539">Nucleus</keyword>
<keyword id="KW-0597">Phosphoprotein</keyword>
<keyword id="KW-1185">Reference proteome</keyword>
<keyword id="KW-0677">Repeat</keyword>
<keyword id="KW-0678">Repressor</keyword>
<keyword id="KW-0804">Transcription</keyword>
<keyword id="KW-0805">Transcription regulation</keyword>
<feature type="chain" id="PRO_0000096348" description="Methyl-CpG-binding protein 2">
    <location>
        <begin position="1"/>
        <end position="492"/>
    </location>
</feature>
<feature type="domain" description="MBD" evidence="3">
    <location>
        <begin position="90"/>
        <end position="162"/>
    </location>
</feature>
<feature type="DNA-binding region" description="A.T hook 1">
    <location>
        <begin position="185"/>
        <end position="197"/>
    </location>
</feature>
<feature type="DNA-binding region" description="A.T hook 2">
    <location>
        <begin position="265"/>
        <end position="277"/>
    </location>
</feature>
<feature type="region of interest" description="Disordered" evidence="4">
    <location>
        <begin position="1"/>
        <end position="119"/>
    </location>
</feature>
<feature type="region of interest" description="Disordered" evidence="4">
    <location>
        <begin position="147"/>
        <end position="218"/>
    </location>
</feature>
<feature type="region of interest" description="Disordered" evidence="4">
    <location>
        <begin position="250"/>
        <end position="275"/>
    </location>
</feature>
<feature type="region of interest" description="Interaction with NCOR2" evidence="2">
    <location>
        <begin position="269"/>
        <end position="309"/>
    </location>
</feature>
<feature type="region of interest" description="Interaction with TBL1XR1" evidence="2">
    <location>
        <begin position="285"/>
        <end position="309"/>
    </location>
</feature>
<feature type="region of interest" description="Disordered" evidence="4">
    <location>
        <begin position="325"/>
        <end position="492"/>
    </location>
</feature>
<feature type="compositionally biased region" description="Basic and acidic residues" evidence="4">
    <location>
        <begin position="8"/>
        <end position="26"/>
    </location>
</feature>
<feature type="compositionally biased region" description="Basic and acidic residues" evidence="4">
    <location>
        <begin position="34"/>
        <end position="45"/>
    </location>
</feature>
<feature type="compositionally biased region" description="Basic and acidic residues" evidence="4">
    <location>
        <begin position="52"/>
        <end position="64"/>
    </location>
</feature>
<feature type="compositionally biased region" description="Low complexity" evidence="4">
    <location>
        <begin position="65"/>
        <end position="81"/>
    </location>
</feature>
<feature type="compositionally biased region" description="Low complexity" evidence="4">
    <location>
        <begin position="352"/>
        <end position="361"/>
    </location>
</feature>
<feature type="compositionally biased region" description="Pro residues" evidence="4">
    <location>
        <begin position="378"/>
        <end position="391"/>
    </location>
</feature>
<feature type="compositionally biased region" description="Low complexity" evidence="4">
    <location>
        <begin position="438"/>
        <end position="453"/>
    </location>
</feature>
<feature type="modified residue" description="Phosphoserine" evidence="10">
    <location>
        <position position="13"/>
    </location>
</feature>
<feature type="modified residue" description="Phosphoserine" evidence="6 10">
    <location>
        <position position="80"/>
    </location>
</feature>
<feature type="modified residue" description="Phosphoserine" evidence="1">
    <location>
        <position position="116"/>
    </location>
</feature>
<feature type="modified residue" description="Omega-N-methylarginine" evidence="2">
    <location>
        <position position="162"/>
    </location>
</feature>
<feature type="modified residue" description="Phosphoserine" evidence="1">
    <location>
        <position position="216"/>
    </location>
</feature>
<feature type="modified residue" description="Phosphoserine" evidence="6 10">
    <location>
        <position position="229"/>
    </location>
</feature>
<feature type="modified residue" description="N6-acetyllysine" evidence="2">
    <location>
        <position position="321"/>
    </location>
</feature>
<feature type="modified residue" description="Phosphoserine; by CaMK2" evidence="6">
    <location>
        <position position="421"/>
    </location>
</feature>
<feature type="modified residue" description="Phosphoserine" evidence="1">
    <location>
        <position position="424"/>
    </location>
</feature>
<feature type="modified residue" description="N6-acetyllysine" evidence="1">
    <location>
        <position position="455"/>
    </location>
</feature>
<feature type="splice variant" id="VSP_022950" description="In isoform B." evidence="8">
    <original>MVAGMLGLRK</original>
    <variation>MAAAAAAAAAAAAAAAAAAAAAAAAPSGGGGGEEERLE</variation>
    <location>
        <begin position="1"/>
        <end position="10"/>
    </location>
</feature>
<feature type="sequence conflict" description="In Ref. 2; ABI55238." evidence="9" ref="2">
    <original>K</original>
    <variation>E</variation>
    <location>
        <position position="10"/>
    </location>
</feature>
<proteinExistence type="evidence at protein level"/>
<dbReference type="EMBL" id="M94064">
    <property type="protein sequence ID" value="AAA41584.1"/>
    <property type="molecule type" value="mRNA"/>
</dbReference>
<dbReference type="EMBL" id="DQ897368">
    <property type="protein sequence ID" value="ABI55237.1"/>
    <property type="molecule type" value="mRNA"/>
</dbReference>
<dbReference type="EMBL" id="DQ897369">
    <property type="protein sequence ID" value="ABI55238.1"/>
    <property type="molecule type" value="mRNA"/>
</dbReference>
<dbReference type="PIR" id="A41907">
    <property type="entry name" value="A41907"/>
</dbReference>
<dbReference type="RefSeq" id="NP_001418483.1">
    <molecule id="Q00566-2"/>
    <property type="nucleotide sequence ID" value="NM_001431554.1"/>
</dbReference>
<dbReference type="RefSeq" id="NP_073164.2">
    <property type="nucleotide sequence ID" value="NM_022673.2"/>
</dbReference>
<dbReference type="RefSeq" id="XP_006229629.1">
    <property type="nucleotide sequence ID" value="XM_006229567.3"/>
</dbReference>
<dbReference type="BMRB" id="Q00566"/>
<dbReference type="SMR" id="Q00566"/>
<dbReference type="BioGRID" id="248038">
    <property type="interactions" value="3"/>
</dbReference>
<dbReference type="CORUM" id="Q00566"/>
<dbReference type="DIP" id="DIP-60875N"/>
<dbReference type="FunCoup" id="Q00566">
    <property type="interactions" value="1353"/>
</dbReference>
<dbReference type="IntAct" id="Q00566">
    <property type="interactions" value="5"/>
</dbReference>
<dbReference type="MINT" id="Q00566"/>
<dbReference type="STRING" id="10116.ENSRNOP00000069913"/>
<dbReference type="GlyGen" id="Q00566">
    <property type="glycosylation" value="10 sites, 1 O-linked glycan (10 sites)"/>
</dbReference>
<dbReference type="iPTMnet" id="Q00566"/>
<dbReference type="PhosphoSitePlus" id="Q00566"/>
<dbReference type="PaxDb" id="10116-ENSRNOP00000053166"/>
<dbReference type="ABCD" id="Q00566">
    <property type="antibodies" value="1 sequenced antibody"/>
</dbReference>
<dbReference type="Ensembl" id="ENSRNOT00000106335.1">
    <molecule id="Q00566-2"/>
    <property type="protein sequence ID" value="ENSRNOP00000094658.1"/>
    <property type="gene ID" value="ENSRNOG00000056659.2"/>
</dbReference>
<dbReference type="GeneID" id="29386"/>
<dbReference type="KEGG" id="rno:29386"/>
<dbReference type="AGR" id="RGD:3075"/>
<dbReference type="CTD" id="4204"/>
<dbReference type="RGD" id="3075">
    <property type="gene designation" value="Mecp2"/>
</dbReference>
<dbReference type="eggNOG" id="KOG4161">
    <property type="taxonomic scope" value="Eukaryota"/>
</dbReference>
<dbReference type="GeneTree" id="ENSGT00530000063687"/>
<dbReference type="InParanoid" id="Q00566"/>
<dbReference type="OMA" id="PADKCRN"/>
<dbReference type="PhylomeDB" id="Q00566"/>
<dbReference type="TreeFam" id="TF332974"/>
<dbReference type="Reactome" id="R-RNO-9022692">
    <property type="pathway name" value="Regulation of MECP2 expression and activity"/>
</dbReference>
<dbReference type="PRO" id="PR:Q00566"/>
<dbReference type="Proteomes" id="UP000002494">
    <property type="component" value="Chromosome X"/>
</dbReference>
<dbReference type="GO" id="GO:0005813">
    <property type="term" value="C:centrosome"/>
    <property type="evidence" value="ECO:0000266"/>
    <property type="project" value="RGD"/>
</dbReference>
<dbReference type="GO" id="GO:0000785">
    <property type="term" value="C:chromatin"/>
    <property type="evidence" value="ECO:0000314"/>
    <property type="project" value="RGD"/>
</dbReference>
<dbReference type="GO" id="GO:0005737">
    <property type="term" value="C:cytoplasm"/>
    <property type="evidence" value="ECO:0000266"/>
    <property type="project" value="RGD"/>
</dbReference>
<dbReference type="GO" id="GO:0005829">
    <property type="term" value="C:cytosol"/>
    <property type="evidence" value="ECO:0000266"/>
    <property type="project" value="RGD"/>
</dbReference>
<dbReference type="GO" id="GO:0098978">
    <property type="term" value="C:glutamatergic synapse"/>
    <property type="evidence" value="ECO:0000314"/>
    <property type="project" value="SynGO"/>
</dbReference>
<dbReference type="GO" id="GO:0000792">
    <property type="term" value="C:heterochromatin"/>
    <property type="evidence" value="ECO:0000266"/>
    <property type="project" value="RGD"/>
</dbReference>
<dbReference type="GO" id="GO:0005654">
    <property type="term" value="C:nucleoplasm"/>
    <property type="evidence" value="ECO:0000304"/>
    <property type="project" value="Reactome"/>
</dbReference>
<dbReference type="GO" id="GO:0005634">
    <property type="term" value="C:nucleus"/>
    <property type="evidence" value="ECO:0000266"/>
    <property type="project" value="RGD"/>
</dbReference>
<dbReference type="GO" id="GO:0098794">
    <property type="term" value="C:postsynapse"/>
    <property type="evidence" value="ECO:0007669"/>
    <property type="project" value="GOC"/>
</dbReference>
<dbReference type="GO" id="GO:0032991">
    <property type="term" value="C:protein-containing complex"/>
    <property type="evidence" value="ECO:0000314"/>
    <property type="project" value="RGD"/>
</dbReference>
<dbReference type="GO" id="GO:0003682">
    <property type="term" value="F:chromatin binding"/>
    <property type="evidence" value="ECO:0000314"/>
    <property type="project" value="RGD"/>
</dbReference>
<dbReference type="GO" id="GO:0031490">
    <property type="term" value="F:chromatin DNA binding"/>
    <property type="evidence" value="ECO:0000314"/>
    <property type="project" value="RGD"/>
</dbReference>
<dbReference type="GO" id="GO:0003677">
    <property type="term" value="F:DNA binding"/>
    <property type="evidence" value="ECO:0000266"/>
    <property type="project" value="RGD"/>
</dbReference>
<dbReference type="GO" id="GO:0010385">
    <property type="term" value="F:double-stranded methylated DNA binding"/>
    <property type="evidence" value="ECO:0000314"/>
    <property type="project" value="RGD"/>
</dbReference>
<dbReference type="GO" id="GO:0019899">
    <property type="term" value="F:enzyme binding"/>
    <property type="evidence" value="ECO:0000353"/>
    <property type="project" value="RGD"/>
</dbReference>
<dbReference type="GO" id="GO:0000400">
    <property type="term" value="F:four-way junction DNA binding"/>
    <property type="evidence" value="ECO:0000314"/>
    <property type="project" value="RGD"/>
</dbReference>
<dbReference type="GO" id="GO:0042826">
    <property type="term" value="F:histone deacetylase binding"/>
    <property type="evidence" value="ECO:0000353"/>
    <property type="project" value="RGD"/>
</dbReference>
<dbReference type="GO" id="GO:0140566">
    <property type="term" value="F:histone reader activity"/>
    <property type="evidence" value="ECO:0000266"/>
    <property type="project" value="RGD"/>
</dbReference>
<dbReference type="GO" id="GO:0042802">
    <property type="term" value="F:identical protein binding"/>
    <property type="evidence" value="ECO:0000353"/>
    <property type="project" value="IntAct"/>
</dbReference>
<dbReference type="GO" id="GO:0008327">
    <property type="term" value="F:methyl-CpG binding"/>
    <property type="evidence" value="ECO:0000314"/>
    <property type="project" value="RGD"/>
</dbReference>
<dbReference type="GO" id="GO:0060090">
    <property type="term" value="F:molecular adaptor activity"/>
    <property type="evidence" value="ECO:0000266"/>
    <property type="project" value="RGD"/>
</dbReference>
<dbReference type="GO" id="GO:0140693">
    <property type="term" value="F:molecular condensate scaffold activity"/>
    <property type="evidence" value="ECO:0000266"/>
    <property type="project" value="RGD"/>
</dbReference>
<dbReference type="GO" id="GO:0003729">
    <property type="term" value="F:mRNA binding"/>
    <property type="evidence" value="ECO:0000266"/>
    <property type="project" value="RGD"/>
</dbReference>
<dbReference type="GO" id="GO:0003676">
    <property type="term" value="F:nucleic acid binding"/>
    <property type="evidence" value="ECO:0000266"/>
    <property type="project" value="RGD"/>
</dbReference>
<dbReference type="GO" id="GO:1990841">
    <property type="term" value="F:promoter-specific chromatin binding"/>
    <property type="evidence" value="ECO:0000314"/>
    <property type="project" value="RGD"/>
</dbReference>
<dbReference type="GO" id="GO:0019904">
    <property type="term" value="F:protein domain specific binding"/>
    <property type="evidence" value="ECO:0000353"/>
    <property type="project" value="RGD"/>
</dbReference>
<dbReference type="GO" id="GO:0035197">
    <property type="term" value="F:siRNA binding"/>
    <property type="evidence" value="ECO:0000266"/>
    <property type="project" value="RGD"/>
</dbReference>
<dbReference type="GO" id="GO:0003714">
    <property type="term" value="F:transcription corepressor activity"/>
    <property type="evidence" value="ECO:0000266"/>
    <property type="project" value="RGD"/>
</dbReference>
<dbReference type="GO" id="GO:0045322">
    <property type="term" value="F:unmethylated CpG binding"/>
    <property type="evidence" value="ECO:0000314"/>
    <property type="project" value="RGD"/>
</dbReference>
<dbReference type="GO" id="GO:0008344">
    <property type="term" value="P:adult locomotory behavior"/>
    <property type="evidence" value="ECO:0000266"/>
    <property type="project" value="RGD"/>
</dbReference>
<dbReference type="GO" id="GO:0008306">
    <property type="term" value="P:associative learning"/>
    <property type="evidence" value="ECO:0000266"/>
    <property type="project" value="RGD"/>
</dbReference>
<dbReference type="GO" id="GO:0001662">
    <property type="term" value="P:behavioral fear response"/>
    <property type="evidence" value="ECO:0000266"/>
    <property type="project" value="RGD"/>
</dbReference>
<dbReference type="GO" id="GO:0006576">
    <property type="term" value="P:biogenic amine metabolic process"/>
    <property type="evidence" value="ECO:0000266"/>
    <property type="project" value="RGD"/>
</dbReference>
<dbReference type="GO" id="GO:0007420">
    <property type="term" value="P:brain development"/>
    <property type="evidence" value="ECO:0000266"/>
    <property type="project" value="RGD"/>
</dbReference>
<dbReference type="GO" id="GO:0032048">
    <property type="term" value="P:cardiolipin metabolic process"/>
    <property type="evidence" value="ECO:0000266"/>
    <property type="project" value="RGD"/>
</dbReference>
<dbReference type="GO" id="GO:0050432">
    <property type="term" value="P:catecholamine secretion"/>
    <property type="evidence" value="ECO:0000266"/>
    <property type="project" value="RGD"/>
</dbReference>
<dbReference type="GO" id="GO:0008283">
    <property type="term" value="P:cell population proliferation"/>
    <property type="evidence" value="ECO:0000266"/>
    <property type="project" value="RGD"/>
</dbReference>
<dbReference type="GO" id="GO:0071317">
    <property type="term" value="P:cellular response to isoquinoline alkaloid"/>
    <property type="evidence" value="ECO:0000314"/>
    <property type="project" value="RGD"/>
</dbReference>
<dbReference type="GO" id="GO:0035865">
    <property type="term" value="P:cellular response to potassium ion"/>
    <property type="evidence" value="ECO:0000314"/>
    <property type="project" value="RGD"/>
</dbReference>
<dbReference type="GO" id="GO:0021549">
    <property type="term" value="P:cerebellum development"/>
    <property type="evidence" value="ECO:0000270"/>
    <property type="project" value="RGD"/>
</dbReference>
<dbReference type="GO" id="GO:0021987">
    <property type="term" value="P:cerebral cortex development"/>
    <property type="evidence" value="ECO:0000270"/>
    <property type="project" value="RGD"/>
</dbReference>
<dbReference type="GO" id="GO:0007268">
    <property type="term" value="P:chemical synaptic transmission"/>
    <property type="evidence" value="ECO:0000266"/>
    <property type="project" value="RGD"/>
</dbReference>
<dbReference type="GO" id="GO:0016358">
    <property type="term" value="P:dendrite development"/>
    <property type="evidence" value="ECO:0000266"/>
    <property type="project" value="RGD"/>
</dbReference>
<dbReference type="GO" id="GO:0040029">
    <property type="term" value="P:epigenetic regulation of gene expression"/>
    <property type="evidence" value="ECO:0000315"/>
    <property type="project" value="RGD"/>
</dbReference>
<dbReference type="GO" id="GO:0060079">
    <property type="term" value="P:excitatory postsynaptic potential"/>
    <property type="evidence" value="ECO:0000266"/>
    <property type="project" value="RGD"/>
</dbReference>
<dbReference type="GO" id="GO:0010467">
    <property type="term" value="P:gene expression"/>
    <property type="evidence" value="ECO:0000266"/>
    <property type="project" value="RGD"/>
</dbReference>
<dbReference type="GO" id="GO:0071514">
    <property type="term" value="P:genomic imprinting"/>
    <property type="evidence" value="ECO:0000266"/>
    <property type="project" value="RGD"/>
</dbReference>
<dbReference type="GO" id="GO:0014009">
    <property type="term" value="P:glial cell proliferation"/>
    <property type="evidence" value="ECO:0000266"/>
    <property type="project" value="RGD"/>
</dbReference>
<dbReference type="GO" id="GO:0008211">
    <property type="term" value="P:glucocorticoid metabolic process"/>
    <property type="evidence" value="ECO:0000266"/>
    <property type="project" value="RGD"/>
</dbReference>
<dbReference type="GO" id="GO:0006541">
    <property type="term" value="P:glutamine metabolic process"/>
    <property type="evidence" value="ECO:0000266"/>
    <property type="project" value="RGD"/>
</dbReference>
<dbReference type="GO" id="GO:0031507">
    <property type="term" value="P:heterochromatin formation"/>
    <property type="evidence" value="ECO:0000266"/>
    <property type="project" value="RGD"/>
</dbReference>
<dbReference type="GO" id="GO:0021766">
    <property type="term" value="P:hippocampus development"/>
    <property type="evidence" value="ECO:0000270"/>
    <property type="project" value="RGD"/>
</dbReference>
<dbReference type="GO" id="GO:0006020">
    <property type="term" value="P:inositol metabolic process"/>
    <property type="evidence" value="ECO:0000266"/>
    <property type="project" value="RGD"/>
</dbReference>
<dbReference type="GO" id="GO:0007612">
    <property type="term" value="P:learning"/>
    <property type="evidence" value="ECO:0000266"/>
    <property type="project" value="RGD"/>
</dbReference>
<dbReference type="GO" id="GO:0007616">
    <property type="term" value="P:long-term memory"/>
    <property type="evidence" value="ECO:0000266"/>
    <property type="project" value="RGD"/>
</dbReference>
<dbReference type="GO" id="GO:0060291">
    <property type="term" value="P:long-term synaptic potentiation"/>
    <property type="evidence" value="ECO:0000266"/>
    <property type="project" value="RGD"/>
</dbReference>
<dbReference type="GO" id="GO:0048286">
    <property type="term" value="P:lung alveolus development"/>
    <property type="evidence" value="ECO:0000270"/>
    <property type="project" value="RGD"/>
</dbReference>
<dbReference type="GO" id="GO:0007613">
    <property type="term" value="P:memory"/>
    <property type="evidence" value="ECO:0000266"/>
    <property type="project" value="RGD"/>
</dbReference>
<dbReference type="GO" id="GO:0033555">
    <property type="term" value="P:multicellular organismal response to stress"/>
    <property type="evidence" value="ECO:0000266"/>
    <property type="project" value="RGD"/>
</dbReference>
<dbReference type="GO" id="GO:0016525">
    <property type="term" value="P:negative regulation of angiogenesis"/>
    <property type="evidence" value="ECO:0000266"/>
    <property type="project" value="RGD"/>
</dbReference>
<dbReference type="GO" id="GO:0048712">
    <property type="term" value="P:negative regulation of astrocyte differentiation"/>
    <property type="evidence" value="ECO:0000314"/>
    <property type="project" value="RGD"/>
</dbReference>
<dbReference type="GO" id="GO:0043537">
    <property type="term" value="P:negative regulation of blood vessel endothelial cell migration"/>
    <property type="evidence" value="ECO:0000266"/>
    <property type="project" value="RGD"/>
</dbReference>
<dbReference type="GO" id="GO:1903860">
    <property type="term" value="P:negative regulation of dendrite extension"/>
    <property type="evidence" value="ECO:0000315"/>
    <property type="project" value="RGD"/>
</dbReference>
<dbReference type="GO" id="GO:0061000">
    <property type="term" value="P:negative regulation of dendritic spine development"/>
    <property type="evidence" value="ECO:0000315"/>
    <property type="project" value="RGD"/>
</dbReference>
<dbReference type="GO" id="GO:0045892">
    <property type="term" value="P:negative regulation of DNA-templated transcription"/>
    <property type="evidence" value="ECO:0000314"/>
    <property type="project" value="RGD"/>
</dbReference>
<dbReference type="GO" id="GO:0010629">
    <property type="term" value="P:negative regulation of gene expression"/>
    <property type="evidence" value="ECO:0000315"/>
    <property type="project" value="RGD"/>
</dbReference>
<dbReference type="GO" id="GO:0044027">
    <property type="term" value="P:negative regulation of gene expression via chromosomal CpG island methylation"/>
    <property type="evidence" value="ECO:0000266"/>
    <property type="project" value="RGD"/>
</dbReference>
<dbReference type="GO" id="GO:0090327">
    <property type="term" value="P:negative regulation of locomotion involved in locomotory behavior"/>
    <property type="evidence" value="ECO:0000315"/>
    <property type="project" value="RGD"/>
</dbReference>
<dbReference type="GO" id="GO:0043524">
    <property type="term" value="P:negative regulation of neuron apoptotic process"/>
    <property type="evidence" value="ECO:0000266"/>
    <property type="project" value="RGD"/>
</dbReference>
<dbReference type="GO" id="GO:2000635">
    <property type="term" value="P:negative regulation of primary miRNA processing"/>
    <property type="evidence" value="ECO:0000315"/>
    <property type="project" value="RGD"/>
</dbReference>
<dbReference type="GO" id="GO:1903941">
    <property type="term" value="P:negative regulation of respiratory gaseous exchange"/>
    <property type="evidence" value="ECO:0000315"/>
    <property type="project" value="RGD"/>
</dbReference>
<dbReference type="GO" id="GO:0051151">
    <property type="term" value="P:negative regulation of smooth muscle cell differentiation"/>
    <property type="evidence" value="ECO:0000266"/>
    <property type="project" value="RGD"/>
</dbReference>
<dbReference type="GO" id="GO:0000122">
    <property type="term" value="P:negative regulation of transcription by RNA polymerase II"/>
    <property type="evidence" value="ECO:0000314"/>
    <property type="project" value="RGD"/>
</dbReference>
<dbReference type="GO" id="GO:0001976">
    <property type="term" value="P:nervous system process involved in regulation of systemic arterial blood pressure"/>
    <property type="evidence" value="ECO:0000266"/>
    <property type="project" value="RGD"/>
</dbReference>
<dbReference type="GO" id="GO:0050905">
    <property type="term" value="P:neuromuscular process"/>
    <property type="evidence" value="ECO:0000266"/>
    <property type="project" value="RGD"/>
</dbReference>
<dbReference type="GO" id="GO:0050884">
    <property type="term" value="P:neuromuscular process controlling posture"/>
    <property type="evidence" value="ECO:0000266"/>
    <property type="project" value="RGD"/>
</dbReference>
<dbReference type="GO" id="GO:0030182">
    <property type="term" value="P:neuron differentiation"/>
    <property type="evidence" value="ECO:0000270"/>
    <property type="project" value="RGD"/>
</dbReference>
<dbReference type="GO" id="GO:0042551">
    <property type="term" value="P:neuron maturation"/>
    <property type="evidence" value="ECO:0000266"/>
    <property type="project" value="RGD"/>
</dbReference>
<dbReference type="GO" id="GO:0031175">
    <property type="term" value="P:neuron projection development"/>
    <property type="evidence" value="ECO:0000266"/>
    <property type="project" value="RGD"/>
</dbReference>
<dbReference type="GO" id="GO:0007219">
    <property type="term" value="P:Notch signaling pathway"/>
    <property type="evidence" value="ECO:0000266"/>
    <property type="project" value="RGD"/>
</dbReference>
<dbReference type="GO" id="GO:0021772">
    <property type="term" value="P:olfactory bulb development"/>
    <property type="evidence" value="ECO:0000270"/>
    <property type="project" value="RGD"/>
</dbReference>
<dbReference type="GO" id="GO:0014003">
    <property type="term" value="P:oligodendrocyte development"/>
    <property type="evidence" value="ECO:0000270"/>
    <property type="project" value="RGD"/>
</dbReference>
<dbReference type="GO" id="GO:0048709">
    <property type="term" value="P:oligodendrocyte differentiation"/>
    <property type="evidence" value="ECO:0000270"/>
    <property type="project" value="RGD"/>
</dbReference>
<dbReference type="GO" id="GO:0046470">
    <property type="term" value="P:phosphatidylcholine metabolic process"/>
    <property type="evidence" value="ECO:0000266"/>
    <property type="project" value="RGD"/>
</dbReference>
<dbReference type="GO" id="GO:1901953">
    <property type="term" value="P:positive regulation of anterograde dense core granule transport"/>
    <property type="evidence" value="ECO:0000315"/>
    <property type="project" value="RGD"/>
</dbReference>
<dbReference type="GO" id="GO:1905492">
    <property type="term" value="P:positive regulation of branching morphogenesis of a nerve"/>
    <property type="evidence" value="ECO:0000315"/>
    <property type="project" value="RGD"/>
</dbReference>
<dbReference type="GO" id="GO:1903861">
    <property type="term" value="P:positive regulation of dendrite extension"/>
    <property type="evidence" value="ECO:0000315"/>
    <property type="project" value="RGD"/>
</dbReference>
<dbReference type="GO" id="GO:0060999">
    <property type="term" value="P:positive regulation of dendritic spine development"/>
    <property type="evidence" value="ECO:0000315"/>
    <property type="project" value="RGD"/>
</dbReference>
<dbReference type="GO" id="GO:0045893">
    <property type="term" value="P:positive regulation of DNA-templated transcription"/>
    <property type="evidence" value="ECO:0000266"/>
    <property type="project" value="RGD"/>
</dbReference>
<dbReference type="GO" id="GO:0010628">
    <property type="term" value="P:positive regulation of gene expression"/>
    <property type="evidence" value="ECO:0000315"/>
    <property type="project" value="RGD"/>
</dbReference>
<dbReference type="GO" id="GO:0060252">
    <property type="term" value="P:positive regulation of glial cell proliferation"/>
    <property type="evidence" value="ECO:0000266"/>
    <property type="project" value="RGD"/>
</dbReference>
<dbReference type="GO" id="GO:0090063">
    <property type="term" value="P:positive regulation of microtubule nucleation"/>
    <property type="evidence" value="ECO:0000266"/>
    <property type="project" value="RGD"/>
</dbReference>
<dbReference type="GO" id="GO:1901956">
    <property type="term" value="P:positive regulation of retrograde dense core granule transport"/>
    <property type="evidence" value="ECO:0000315"/>
    <property type="project" value="RGD"/>
</dbReference>
<dbReference type="GO" id="GO:0031915">
    <property type="term" value="P:positive regulation of synaptic plasticity"/>
    <property type="evidence" value="ECO:0000315"/>
    <property type="project" value="RGD"/>
</dbReference>
<dbReference type="GO" id="GO:0045944">
    <property type="term" value="P:positive regulation of transcription by RNA polymerase II"/>
    <property type="evidence" value="ECO:0000266"/>
    <property type="project" value="RGD"/>
</dbReference>
<dbReference type="GO" id="GO:0009791">
    <property type="term" value="P:post-embryonic development"/>
    <property type="evidence" value="ECO:0000266"/>
    <property type="project" value="RGD"/>
</dbReference>
<dbReference type="GO" id="GO:0021740">
    <property type="term" value="P:principal sensory nucleus of trigeminal nerve development"/>
    <property type="evidence" value="ECO:0000270"/>
    <property type="project" value="RGD"/>
</dbReference>
<dbReference type="GO" id="GO:0019230">
    <property type="term" value="P:proprioception"/>
    <property type="evidence" value="ECO:0000266"/>
    <property type="project" value="RGD"/>
</dbReference>
<dbReference type="GO" id="GO:0008104">
    <property type="term" value="P:protein localization"/>
    <property type="evidence" value="ECO:0000266"/>
    <property type="project" value="RGD"/>
</dbReference>
<dbReference type="GO" id="GO:0099611">
    <property type="term" value="P:regulation of action potential firing threshold"/>
    <property type="evidence" value="ECO:0000315"/>
    <property type="project" value="RGD"/>
</dbReference>
<dbReference type="GO" id="GO:0010468">
    <property type="term" value="P:regulation of gene expression"/>
    <property type="evidence" value="ECO:0000266"/>
    <property type="project" value="RGD"/>
</dbReference>
<dbReference type="GO" id="GO:0002087">
    <property type="term" value="P:regulation of respiratory gaseous exchange by nervous system process"/>
    <property type="evidence" value="ECO:0000266"/>
    <property type="project" value="RGD"/>
</dbReference>
<dbReference type="GO" id="GO:0050807">
    <property type="term" value="P:regulation of synapse organization"/>
    <property type="evidence" value="ECO:0000314"/>
    <property type="project" value="SynGO"/>
</dbReference>
<dbReference type="GO" id="GO:0048167">
    <property type="term" value="P:regulation of synaptic plasticity"/>
    <property type="evidence" value="ECO:0000266"/>
    <property type="project" value="RGD"/>
</dbReference>
<dbReference type="GO" id="GO:0006357">
    <property type="term" value="P:regulation of transcription by RNA polymerase II"/>
    <property type="evidence" value="ECO:0000266"/>
    <property type="project" value="RGD"/>
</dbReference>
<dbReference type="GO" id="GO:0007585">
    <property type="term" value="P:respiratory gaseous exchange by respiratory system"/>
    <property type="evidence" value="ECO:0000266"/>
    <property type="project" value="RGD"/>
</dbReference>
<dbReference type="GO" id="GO:0097305">
    <property type="term" value="P:response to alcohol"/>
    <property type="evidence" value="ECO:0000270"/>
    <property type="project" value="RGD"/>
</dbReference>
<dbReference type="GO" id="GO:1903925">
    <property type="term" value="P:response to bisphenol A"/>
    <property type="evidence" value="ECO:0000270"/>
    <property type="project" value="RGD"/>
</dbReference>
<dbReference type="GO" id="GO:0042220">
    <property type="term" value="P:response to cocaine"/>
    <property type="evidence" value="ECO:0000314"/>
    <property type="project" value="RGD"/>
</dbReference>
<dbReference type="GO" id="GO:0032355">
    <property type="term" value="P:response to estradiol"/>
    <property type="evidence" value="ECO:0000270"/>
    <property type="project" value="RGD"/>
</dbReference>
<dbReference type="GO" id="GO:0001666">
    <property type="term" value="P:response to hypoxia"/>
    <property type="evidence" value="ECO:0000266"/>
    <property type="project" value="RGD"/>
</dbReference>
<dbReference type="GO" id="GO:0010212">
    <property type="term" value="P:response to ionizing radiation"/>
    <property type="evidence" value="ECO:0000270"/>
    <property type="project" value="RGD"/>
</dbReference>
<dbReference type="GO" id="GO:0010288">
    <property type="term" value="P:response to lead ion"/>
    <property type="evidence" value="ECO:0000270"/>
    <property type="project" value="RGD"/>
</dbReference>
<dbReference type="GO" id="GO:0051707">
    <property type="term" value="P:response to other organism"/>
    <property type="evidence" value="ECO:0000266"/>
    <property type="project" value="RGD"/>
</dbReference>
<dbReference type="GO" id="GO:0019233">
    <property type="term" value="P:sensory perception of pain"/>
    <property type="evidence" value="ECO:0000266"/>
    <property type="project" value="RGD"/>
</dbReference>
<dbReference type="GO" id="GO:0035176">
    <property type="term" value="P:social behavior"/>
    <property type="evidence" value="ECO:0000315"/>
    <property type="project" value="RGD"/>
</dbReference>
<dbReference type="GO" id="GO:0021510">
    <property type="term" value="P:spinal cord development"/>
    <property type="evidence" value="ECO:0000270"/>
    <property type="project" value="RGD"/>
</dbReference>
<dbReference type="GO" id="GO:0001964">
    <property type="term" value="P:startle response"/>
    <property type="evidence" value="ECO:0000266"/>
    <property type="project" value="RGD"/>
</dbReference>
<dbReference type="GO" id="GO:0021756">
    <property type="term" value="P:striatum development"/>
    <property type="evidence" value="ECO:0000270"/>
    <property type="project" value="RGD"/>
</dbReference>
<dbReference type="GO" id="GO:0007416">
    <property type="term" value="P:synapse assembly"/>
    <property type="evidence" value="ECO:0000266"/>
    <property type="project" value="RGD"/>
</dbReference>
<dbReference type="GO" id="GO:0021794">
    <property type="term" value="P:thalamus development"/>
    <property type="evidence" value="ECO:0000270"/>
    <property type="project" value="RGD"/>
</dbReference>
<dbReference type="GO" id="GO:0099191">
    <property type="term" value="P:trans-synaptic signaling by BDNF"/>
    <property type="evidence" value="ECO:0000266"/>
    <property type="project" value="RGD"/>
</dbReference>
<dbReference type="GO" id="GO:0003229">
    <property type="term" value="P:ventricular cardiac muscle tissue development"/>
    <property type="evidence" value="ECO:0000270"/>
    <property type="project" value="RGD"/>
</dbReference>
<dbReference type="GO" id="GO:0021591">
    <property type="term" value="P:ventricular system development"/>
    <property type="evidence" value="ECO:0000266"/>
    <property type="project" value="RGD"/>
</dbReference>
<dbReference type="GO" id="GO:0008542">
    <property type="term" value="P:visual learning"/>
    <property type="evidence" value="ECO:0000266"/>
    <property type="project" value="RGD"/>
</dbReference>
<dbReference type="CDD" id="cd01396">
    <property type="entry name" value="MeCP2_MBD"/>
    <property type="match status" value="1"/>
</dbReference>
<dbReference type="FunFam" id="3.30.890.10:FF:000004">
    <property type="entry name" value="Methyl-CpG-binding protein 2"/>
    <property type="match status" value="1"/>
</dbReference>
<dbReference type="Gene3D" id="3.30.890.10">
    <property type="entry name" value="Methyl-cpg-binding Protein 2, Chain A"/>
    <property type="match status" value="1"/>
</dbReference>
<dbReference type="InterPro" id="IPR016177">
    <property type="entry name" value="DNA-bd_dom_sf"/>
</dbReference>
<dbReference type="InterPro" id="IPR017353">
    <property type="entry name" value="Me_CpG-bd_MeCP2"/>
</dbReference>
<dbReference type="InterPro" id="IPR045138">
    <property type="entry name" value="MeCP2/MBD4"/>
</dbReference>
<dbReference type="InterPro" id="IPR001739">
    <property type="entry name" value="Methyl_CpG_DNA-bd"/>
</dbReference>
<dbReference type="PANTHER" id="PTHR15074">
    <property type="entry name" value="METHYL-CPG-BINDING PROTEIN"/>
    <property type="match status" value="1"/>
</dbReference>
<dbReference type="PANTHER" id="PTHR15074:SF6">
    <property type="entry name" value="METHYL-CPG-BINDING PROTEIN 2"/>
    <property type="match status" value="1"/>
</dbReference>
<dbReference type="Pfam" id="PF01429">
    <property type="entry name" value="MBD"/>
    <property type="match status" value="1"/>
</dbReference>
<dbReference type="PIRSF" id="PIRSF038006">
    <property type="entry name" value="Methyl_CpG_bd_MeCP2"/>
    <property type="match status" value="1"/>
</dbReference>
<dbReference type="SMART" id="SM00391">
    <property type="entry name" value="MBD"/>
    <property type="match status" value="1"/>
</dbReference>
<dbReference type="SUPFAM" id="SSF54171">
    <property type="entry name" value="DNA-binding domain"/>
    <property type="match status" value="1"/>
</dbReference>
<dbReference type="PROSITE" id="PS50982">
    <property type="entry name" value="MBD"/>
    <property type="match status" value="1"/>
</dbReference>
<name>MECP2_RAT</name>
<gene>
    <name type="primary">Mecp2</name>
</gene>
<sequence>MVAGMLGLRKEKSEDQDLQGLKEKPLKFKKVKKDKKEDKEGKHEPLQPSAHHSAEPAEAGKAETSESSGSAPAVPEASASPKQRRSIIRDRGPMYDDPTLPEGWTRKLKQRKSGRSAGKYDVYLINPQGKAFRSKVELIAYFEKVGDTSLDPNDFDFTVTGRGSPSRREQKPPKKPKSPKAPGTGRGRGRPKGSGTGRPKAAASEGVQVKRVLEKSPGKLLVKMPFQASPGGKGEGGGATTSAQVMVIKRPGRKRKAEADPQAIPKKRGRKPGSVVAAAAAEAKKKAVKESSIRSVQETVLPIKKRKTRETVSIEVKEVVKPLLVSTLGEKSGKGLKTCKSPGRKSKESSPKGRSSSASSPPKKEHHHHHHHAESPKAPMPLLPPPPPPEPQSSEDPISPPEPQDLSSSICKEEKMPRAGSLESDGCPKEPAKTQPMVAAAATTTTTTTTTVAEKYKHRGEGERKDIVSSSMPRPNREEPVDSRTPVTERVS</sequence>
<organism>
    <name type="scientific">Rattus norvegicus</name>
    <name type="common">Rat</name>
    <dbReference type="NCBI Taxonomy" id="10116"/>
    <lineage>
        <taxon>Eukaryota</taxon>
        <taxon>Metazoa</taxon>
        <taxon>Chordata</taxon>
        <taxon>Craniata</taxon>
        <taxon>Vertebrata</taxon>
        <taxon>Euteleostomi</taxon>
        <taxon>Mammalia</taxon>
        <taxon>Eutheria</taxon>
        <taxon>Euarchontoglires</taxon>
        <taxon>Glires</taxon>
        <taxon>Rodentia</taxon>
        <taxon>Myomorpha</taxon>
        <taxon>Muroidea</taxon>
        <taxon>Muridae</taxon>
        <taxon>Murinae</taxon>
        <taxon>Rattus</taxon>
    </lineage>
</organism>
<protein>
    <recommendedName>
        <fullName>Methyl-CpG-binding protein 2</fullName>
        <shortName>MeCp-2 protein</shortName>
        <shortName>MeCp2</shortName>
    </recommendedName>
</protein>
<reference key="1">
    <citation type="journal article" date="1992" name="Cell">
        <title>Purification, sequence, and cellular localization of a novel chromosomal protein that binds to methylated DNA.</title>
        <authorList>
            <person name="Lewis J.D."/>
            <person name="Meehan R.R."/>
            <person name="Henzel W.J."/>
            <person name="Maurer-Fogy I."/>
            <person name="Jeppesen P."/>
            <person name="Klein F."/>
            <person name="Bird A."/>
        </authorList>
    </citation>
    <scope>NUCLEOTIDE SEQUENCE [MRNA] (ISOFORM A)</scope>
    <scope>PARTIAL PROTEIN SEQUENCE</scope>
    <source>
        <strain>Wistar</strain>
        <tissue>Brain</tissue>
        <tissue>Corpus striatum</tissue>
    </source>
</reference>
<reference key="2">
    <citation type="journal article" date="2006" name="Mol. Pharmacol.">
        <title>Fluoxetine and cocaine induce the epigenetic factors MeCP2 and MBD1 in adult rat brain.</title>
        <authorList>
            <person name="Cassel S."/>
            <person name="Carouge D."/>
            <person name="Gensburger C."/>
            <person name="Anglard P."/>
            <person name="Burgun C."/>
            <person name="Dietrich J.-B."/>
            <person name="Aunis D."/>
            <person name="Zwiller J."/>
        </authorList>
    </citation>
    <scope>NUCLEOTIDE SEQUENCE [MRNA] (ISOFORMS A AND B)</scope>
    <scope>SUBCELLULAR LOCATION</scope>
    <scope>INDUCTION BY FLUOXETINE AND COCAINE</scope>
    <source>
        <strain>Wistar</strain>
        <tissue>Brain cortex</tissue>
    </source>
</reference>
<reference key="3">
    <citation type="journal article" date="2006" name="Neuron">
        <title>Brain-specific phosphorylation of MeCP2 regulates activity-dependent Bdnf transcription, dendritic growth, and spine maturation.</title>
        <authorList>
            <person name="Zhou Z."/>
            <person name="Hong E.J."/>
            <person name="Cohen S."/>
            <person name="Zhao W.-N."/>
            <person name="Ho H.H."/>
            <person name="Schmidt L."/>
            <person name="Chen W.G."/>
            <person name="Lin Y."/>
            <person name="Savner E."/>
            <person name="Griffith E.C."/>
            <person name="Hu L."/>
            <person name="Steen J.A.J."/>
            <person name="Weitz C.J."/>
            <person name="Greenberg M.E."/>
        </authorList>
    </citation>
    <scope>PHOSPHORYLATION AT SER-80; SER-229 AND SER-421</scope>
    <scope>IDENTIFICATION BY MASS SPECTROMETRY</scope>
</reference>
<reference key="4">
    <citation type="journal article" date="2007" name="Proc. Natl. Acad. Sci. U.S.A.">
        <title>Interaction between chromatin proteins MECP2 and ATRX is disrupted by mutations that cause inherited mental retardation.</title>
        <authorList>
            <person name="Nan X."/>
            <person name="Hou J."/>
            <person name="Maclean A."/>
            <person name="Nasir J."/>
            <person name="Lafuente M.J."/>
            <person name="Shu X."/>
            <person name="Kriaucionis S."/>
            <person name="Bird A."/>
        </authorList>
    </citation>
    <scope>INTERACTION WITH ATRX</scope>
</reference>
<reference key="5">
    <citation type="journal article" date="2012" name="Nat. Commun.">
        <title>Quantitative maps of protein phosphorylation sites across 14 different rat organs and tissues.</title>
        <authorList>
            <person name="Lundby A."/>
            <person name="Secher A."/>
            <person name="Lage K."/>
            <person name="Nordsborg N.B."/>
            <person name="Dmytriyev A."/>
            <person name="Lundby C."/>
            <person name="Olsen J.V."/>
        </authorList>
    </citation>
    <scope>PHOSPHORYLATION [LARGE SCALE ANALYSIS] AT SER-13; SER-80 AND SER-229</scope>
    <scope>IDENTIFICATION BY MASS SPECTROMETRY [LARGE SCALE ANALYSIS]</scope>
</reference>
<evidence type="ECO:0000250" key="1">
    <source>
        <dbReference type="UniProtKB" id="P51608"/>
    </source>
</evidence>
<evidence type="ECO:0000250" key="2">
    <source>
        <dbReference type="UniProtKB" id="Q9Z2D6"/>
    </source>
</evidence>
<evidence type="ECO:0000255" key="3">
    <source>
        <dbReference type="PROSITE-ProRule" id="PRU00338"/>
    </source>
</evidence>
<evidence type="ECO:0000256" key="4">
    <source>
        <dbReference type="SAM" id="MobiDB-lite"/>
    </source>
</evidence>
<evidence type="ECO:0000269" key="5">
    <source>
    </source>
</evidence>
<evidence type="ECO:0000269" key="6">
    <source>
    </source>
</evidence>
<evidence type="ECO:0000269" key="7">
    <source>
    </source>
</evidence>
<evidence type="ECO:0000303" key="8">
    <source>
    </source>
</evidence>
<evidence type="ECO:0000305" key="9"/>
<evidence type="ECO:0007744" key="10">
    <source>
    </source>
</evidence>
<comment type="function">
    <text evidence="2">Chromosomal protein that binds to methylated DNA. It can bind specifically to a single methyl-CpG pair. It is not influenced by sequences flanking the methyl-CpGs. Mediates transcriptional repression through interaction with histone deacetylase and the corepressor SIN3A. Binds both 5-methylcytosine (5mC) and 5-hydroxymethylcytosine (5hmC)-containing DNA, with a preference for 5-methylcytosine (5mC).</text>
</comment>
<comment type="subunit">
    <text evidence="1 2 7">Interacts with FNBP3 (By similarity). Interacts with CDKL5 (By similarity). Interacts with ATRX; MECP2 recruits ATRX to pericentric heterochromatin in neuronal cells (PubMed:17296936). Interacts with NCOR2 (By similarity). Interacts with TBL1XR1; bridges interaction between MECP2 and NCOR1. Interacts with TBL1X; recruits TBL1X to the heterochromatin foci (By similarity).</text>
</comment>
<comment type="interaction">
    <interactant intactId="EBI-9396907">
        <id>Q00566</id>
    </interactant>
    <interactant intactId="EBI-9396907">
        <id>Q00566</id>
        <label>Mecp2</label>
    </interactant>
    <organismsDiffer>false</organismsDiffer>
    <experiments>5</experiments>
</comment>
<comment type="interaction">
    <interactant intactId="EBI-9396907">
        <id>Q00566</id>
    </interactant>
    <interactant intactId="EBI-396461">
        <id>P46100</id>
        <label>ATRX</label>
    </interactant>
    <organismsDiffer>true</organismsDiffer>
    <experiments>5</experiments>
</comment>
<comment type="interaction">
    <interactant intactId="EBI-9396907">
        <id>Q00566</id>
    </interactant>
    <interactant intactId="EBI-5716946">
        <id>Q9Z2E1</id>
        <label>Mbd2</label>
    </interactant>
    <organismsDiffer>true</organismsDiffer>
    <experiments>9</experiments>
</comment>
<comment type="subcellular location">
    <subcellularLocation>
        <location evidence="5">Nucleus</location>
    </subcellularLocation>
    <text evidence="1">Colocalized with methyl-CpG in the genome. Colocalized with TBL1X to the heterochromatin foci.</text>
</comment>
<comment type="alternative products">
    <event type="alternative splicing"/>
    <isoform>
        <id>Q00566-1</id>
        <name>A</name>
        <name>e2</name>
        <sequence type="displayed"/>
    </isoform>
    <isoform>
        <id>Q00566-2</id>
        <name>B</name>
        <name>e1</name>
        <sequence type="described" ref="VSP_022950"/>
    </isoform>
</comment>
<comment type="tissue specificity">
    <text>Present in all adult somatic tissues tested.</text>
</comment>
<comment type="induction">
    <text evidence="5">In brain, by repeated injections of fluoxetine or cocaine.</text>
</comment>
<comment type="PTM">
    <text evidence="6">Phosphorylated on Ser-421 by CaMK2 in brain upon synaptic activity, which attenuates its repressor activity and seems to regulate dendritic growth and spine maturation.</text>
</comment>